<dbReference type="EC" id="6.1.1.20" evidence="1"/>
<dbReference type="EMBL" id="CP001078">
    <property type="protein sequence ID" value="ACD53317.1"/>
    <property type="molecule type" value="Genomic_DNA"/>
</dbReference>
<dbReference type="RefSeq" id="WP_012425875.1">
    <property type="nucleotide sequence ID" value="NC_010723.1"/>
</dbReference>
<dbReference type="SMR" id="B2V594"/>
<dbReference type="KEGG" id="cbt:CLH_2242"/>
<dbReference type="HOGENOM" id="CLU_025086_0_1_9"/>
<dbReference type="GO" id="GO:0005737">
    <property type="term" value="C:cytoplasm"/>
    <property type="evidence" value="ECO:0007669"/>
    <property type="project" value="UniProtKB-SubCell"/>
</dbReference>
<dbReference type="GO" id="GO:0005524">
    <property type="term" value="F:ATP binding"/>
    <property type="evidence" value="ECO:0007669"/>
    <property type="project" value="UniProtKB-UniRule"/>
</dbReference>
<dbReference type="GO" id="GO:0140096">
    <property type="term" value="F:catalytic activity, acting on a protein"/>
    <property type="evidence" value="ECO:0007669"/>
    <property type="project" value="UniProtKB-ARBA"/>
</dbReference>
<dbReference type="GO" id="GO:0000287">
    <property type="term" value="F:magnesium ion binding"/>
    <property type="evidence" value="ECO:0007669"/>
    <property type="project" value="UniProtKB-UniRule"/>
</dbReference>
<dbReference type="GO" id="GO:0004826">
    <property type="term" value="F:phenylalanine-tRNA ligase activity"/>
    <property type="evidence" value="ECO:0007669"/>
    <property type="project" value="UniProtKB-UniRule"/>
</dbReference>
<dbReference type="GO" id="GO:0016740">
    <property type="term" value="F:transferase activity"/>
    <property type="evidence" value="ECO:0007669"/>
    <property type="project" value="UniProtKB-ARBA"/>
</dbReference>
<dbReference type="GO" id="GO:0000049">
    <property type="term" value="F:tRNA binding"/>
    <property type="evidence" value="ECO:0007669"/>
    <property type="project" value="InterPro"/>
</dbReference>
<dbReference type="GO" id="GO:0006432">
    <property type="term" value="P:phenylalanyl-tRNA aminoacylation"/>
    <property type="evidence" value="ECO:0007669"/>
    <property type="project" value="UniProtKB-UniRule"/>
</dbReference>
<dbReference type="CDD" id="cd00496">
    <property type="entry name" value="PheRS_alpha_core"/>
    <property type="match status" value="1"/>
</dbReference>
<dbReference type="FunFam" id="3.30.930.10:FF:000003">
    <property type="entry name" value="Phenylalanine--tRNA ligase alpha subunit"/>
    <property type="match status" value="1"/>
</dbReference>
<dbReference type="Gene3D" id="3.30.930.10">
    <property type="entry name" value="Bira Bifunctional Protein, Domain 2"/>
    <property type="match status" value="1"/>
</dbReference>
<dbReference type="HAMAP" id="MF_00281">
    <property type="entry name" value="Phe_tRNA_synth_alpha1"/>
    <property type="match status" value="1"/>
</dbReference>
<dbReference type="InterPro" id="IPR006195">
    <property type="entry name" value="aa-tRNA-synth_II"/>
</dbReference>
<dbReference type="InterPro" id="IPR045864">
    <property type="entry name" value="aa-tRNA-synth_II/BPL/LPL"/>
</dbReference>
<dbReference type="InterPro" id="IPR004529">
    <property type="entry name" value="Phe-tRNA-synth_IIc_asu"/>
</dbReference>
<dbReference type="InterPro" id="IPR004188">
    <property type="entry name" value="Phe-tRNA_ligase_II_N"/>
</dbReference>
<dbReference type="InterPro" id="IPR022911">
    <property type="entry name" value="Phe_tRNA_ligase_alpha1_bac"/>
</dbReference>
<dbReference type="InterPro" id="IPR002319">
    <property type="entry name" value="Phenylalanyl-tRNA_Synthase"/>
</dbReference>
<dbReference type="InterPro" id="IPR010978">
    <property type="entry name" value="tRNA-bd_arm"/>
</dbReference>
<dbReference type="NCBIfam" id="TIGR00468">
    <property type="entry name" value="pheS"/>
    <property type="match status" value="1"/>
</dbReference>
<dbReference type="PANTHER" id="PTHR11538:SF41">
    <property type="entry name" value="PHENYLALANINE--TRNA LIGASE, MITOCHONDRIAL"/>
    <property type="match status" value="1"/>
</dbReference>
<dbReference type="PANTHER" id="PTHR11538">
    <property type="entry name" value="PHENYLALANYL-TRNA SYNTHETASE"/>
    <property type="match status" value="1"/>
</dbReference>
<dbReference type="Pfam" id="PF02912">
    <property type="entry name" value="Phe_tRNA-synt_N"/>
    <property type="match status" value="1"/>
</dbReference>
<dbReference type="Pfam" id="PF01409">
    <property type="entry name" value="tRNA-synt_2d"/>
    <property type="match status" value="1"/>
</dbReference>
<dbReference type="SUPFAM" id="SSF55681">
    <property type="entry name" value="Class II aaRS and biotin synthetases"/>
    <property type="match status" value="1"/>
</dbReference>
<dbReference type="SUPFAM" id="SSF46589">
    <property type="entry name" value="tRNA-binding arm"/>
    <property type="match status" value="1"/>
</dbReference>
<dbReference type="PROSITE" id="PS50862">
    <property type="entry name" value="AA_TRNA_LIGASE_II"/>
    <property type="match status" value="1"/>
</dbReference>
<evidence type="ECO:0000255" key="1">
    <source>
        <dbReference type="HAMAP-Rule" id="MF_00281"/>
    </source>
</evidence>
<reference key="1">
    <citation type="submission" date="2008-05" db="EMBL/GenBank/DDBJ databases">
        <title>Complete genome sequence of Clostridium botulinum E3 str. Alaska E43.</title>
        <authorList>
            <person name="Brinkac L.M."/>
            <person name="Brown J.L."/>
            <person name="Bruce D."/>
            <person name="Detter C."/>
            <person name="Munk C."/>
            <person name="Smith L.A."/>
            <person name="Smith T.J."/>
            <person name="Sutton G."/>
            <person name="Brettin T.S."/>
        </authorList>
    </citation>
    <scope>NUCLEOTIDE SEQUENCE [LARGE SCALE GENOMIC DNA]</scope>
    <source>
        <strain>Alaska E43 / Type E3</strain>
    </source>
</reference>
<proteinExistence type="inferred from homology"/>
<feature type="chain" id="PRO_1000114858" description="Phenylalanine--tRNA ligase alpha subunit">
    <location>
        <begin position="1"/>
        <end position="339"/>
    </location>
</feature>
<feature type="binding site" evidence="1">
    <location>
        <position position="254"/>
    </location>
    <ligand>
        <name>Mg(2+)</name>
        <dbReference type="ChEBI" id="CHEBI:18420"/>
        <note>shared with beta subunit</note>
    </ligand>
</feature>
<protein>
    <recommendedName>
        <fullName evidence="1">Phenylalanine--tRNA ligase alpha subunit</fullName>
        <ecNumber evidence="1">6.1.1.20</ecNumber>
    </recommendedName>
    <alternativeName>
        <fullName evidence="1">Phenylalanyl-tRNA synthetase alpha subunit</fullName>
        <shortName evidence="1">PheRS</shortName>
    </alternativeName>
</protein>
<sequence length="339" mass="38272">MKEKLKELQELAIKQIENSIKSNELEEIRVKFLGKKGELTTILRGMGGLSPEERPLVGKLVNEAKAKVEEKLESAIKKIKDKEKAEKLAGETIDISLPGKKQVIGKSHPLELTLKNMEDIFVSMGFTIEEGPEVEYDHYNFEALNIPKNHPARSEQDTLYINDNIVLRTQTSPVQVRTMENQKPPIKMISPGKVYRSDSVDATHSPIFYQMEGLVIDKGVTFADLKGTLELFAKKMFGDKVETKFRPHHFPFTEPSAEMDATCFVCGGEGCRVCKNSGWIELLGCGMVHPNVLRNCGIDPEVYSGFAFGFGVDRMVMLKYGIDDIRLLYESDMRFLNQF</sequence>
<organism>
    <name type="scientific">Clostridium botulinum (strain Alaska E43 / Type E3)</name>
    <dbReference type="NCBI Taxonomy" id="508767"/>
    <lineage>
        <taxon>Bacteria</taxon>
        <taxon>Bacillati</taxon>
        <taxon>Bacillota</taxon>
        <taxon>Clostridia</taxon>
        <taxon>Eubacteriales</taxon>
        <taxon>Clostridiaceae</taxon>
        <taxon>Clostridium</taxon>
    </lineage>
</organism>
<gene>
    <name evidence="1" type="primary">pheS</name>
    <name type="ordered locus">CLH_2242</name>
</gene>
<comment type="catalytic activity">
    <reaction evidence="1">
        <text>tRNA(Phe) + L-phenylalanine + ATP = L-phenylalanyl-tRNA(Phe) + AMP + diphosphate + H(+)</text>
        <dbReference type="Rhea" id="RHEA:19413"/>
        <dbReference type="Rhea" id="RHEA-COMP:9668"/>
        <dbReference type="Rhea" id="RHEA-COMP:9699"/>
        <dbReference type="ChEBI" id="CHEBI:15378"/>
        <dbReference type="ChEBI" id="CHEBI:30616"/>
        <dbReference type="ChEBI" id="CHEBI:33019"/>
        <dbReference type="ChEBI" id="CHEBI:58095"/>
        <dbReference type="ChEBI" id="CHEBI:78442"/>
        <dbReference type="ChEBI" id="CHEBI:78531"/>
        <dbReference type="ChEBI" id="CHEBI:456215"/>
        <dbReference type="EC" id="6.1.1.20"/>
    </reaction>
</comment>
<comment type="cofactor">
    <cofactor evidence="1">
        <name>Mg(2+)</name>
        <dbReference type="ChEBI" id="CHEBI:18420"/>
    </cofactor>
    <text evidence="1">Binds 2 magnesium ions per tetramer.</text>
</comment>
<comment type="subunit">
    <text evidence="1">Tetramer of two alpha and two beta subunits.</text>
</comment>
<comment type="subcellular location">
    <subcellularLocation>
        <location evidence="1">Cytoplasm</location>
    </subcellularLocation>
</comment>
<comment type="similarity">
    <text evidence="1">Belongs to the class-II aminoacyl-tRNA synthetase family. Phe-tRNA synthetase alpha subunit type 1 subfamily.</text>
</comment>
<accession>B2V594</accession>
<name>SYFA_CLOBA</name>
<keyword id="KW-0030">Aminoacyl-tRNA synthetase</keyword>
<keyword id="KW-0067">ATP-binding</keyword>
<keyword id="KW-0963">Cytoplasm</keyword>
<keyword id="KW-0436">Ligase</keyword>
<keyword id="KW-0460">Magnesium</keyword>
<keyword id="KW-0479">Metal-binding</keyword>
<keyword id="KW-0547">Nucleotide-binding</keyword>
<keyword id="KW-0648">Protein biosynthesis</keyword>